<sequence length="278" mass="28474">MMLEARTAFTLLTVLPLRGPEHTDRRLAGRAMALAPFVGLALGLLAGSAVFATRIVTAVPGQRAQTLLPAVVGVTVLALVTRGLHLDGLADLGDGLGAWRARGRDRALEIMRESTIGAFGAIIVLFVVLLQVGALSTTISAHRGTLSILVAAMTSRLAATLACTGAVPPARPDGLGALVAGTVRTRDAALSFLAVCAVAALAGLLDFDGGGPGRALRAVLAVWVGTGVSFLLRRYLLTRFGGITGDILGGLIEITAAATLLVMAMTIPTPVLHTLGLH</sequence>
<keyword id="KW-1003">Cell membrane</keyword>
<keyword id="KW-0169">Cobalamin biosynthesis</keyword>
<keyword id="KW-0460">Magnesium</keyword>
<keyword id="KW-0472">Membrane</keyword>
<keyword id="KW-1185">Reference proteome</keyword>
<keyword id="KW-0808">Transferase</keyword>
<keyword id="KW-0812">Transmembrane</keyword>
<keyword id="KW-1133">Transmembrane helix</keyword>
<proteinExistence type="inferred from homology"/>
<protein>
    <recommendedName>
        <fullName evidence="1">Adenosylcobinamide-GDP ribazoletransferase</fullName>
        <ecNumber evidence="1">2.7.8.26</ecNumber>
    </recommendedName>
    <alternativeName>
        <fullName evidence="1">Cobalamin synthase</fullName>
    </alternativeName>
    <alternativeName>
        <fullName evidence="1">Cobalamin-5'-phosphate synthase</fullName>
    </alternativeName>
</protein>
<feature type="chain" id="PRO_1000045769" description="Adenosylcobinamide-GDP ribazoletransferase">
    <location>
        <begin position="1"/>
        <end position="278"/>
    </location>
</feature>
<feature type="transmembrane region" description="Helical" evidence="1">
    <location>
        <begin position="31"/>
        <end position="51"/>
    </location>
</feature>
<feature type="transmembrane region" description="Helical" evidence="1">
    <location>
        <begin position="66"/>
        <end position="86"/>
    </location>
</feature>
<feature type="transmembrane region" description="Helical" evidence="1">
    <location>
        <begin position="115"/>
        <end position="135"/>
    </location>
</feature>
<feature type="transmembrane region" description="Helical" evidence="1">
    <location>
        <begin position="148"/>
        <end position="168"/>
    </location>
</feature>
<feature type="transmembrane region" description="Helical" evidence="1">
    <location>
        <begin position="187"/>
        <end position="207"/>
    </location>
</feature>
<feature type="transmembrane region" description="Helical" evidence="1">
    <location>
        <begin position="215"/>
        <end position="237"/>
    </location>
</feature>
<feature type="transmembrane region" description="Helical" evidence="1">
    <location>
        <begin position="247"/>
        <end position="267"/>
    </location>
</feature>
<organism>
    <name type="scientific">Frankia casuarinae (strain DSM 45818 / CECT 9043 / HFP020203 / CcI3)</name>
    <dbReference type="NCBI Taxonomy" id="106370"/>
    <lineage>
        <taxon>Bacteria</taxon>
        <taxon>Bacillati</taxon>
        <taxon>Actinomycetota</taxon>
        <taxon>Actinomycetes</taxon>
        <taxon>Frankiales</taxon>
        <taxon>Frankiaceae</taxon>
        <taxon>Frankia</taxon>
    </lineage>
</organism>
<name>COBS_FRACC</name>
<reference key="1">
    <citation type="journal article" date="2007" name="Genome Res.">
        <title>Genome characteristics of facultatively symbiotic Frankia sp. strains reflect host range and host plant biogeography.</title>
        <authorList>
            <person name="Normand P."/>
            <person name="Lapierre P."/>
            <person name="Tisa L.S."/>
            <person name="Gogarten J.P."/>
            <person name="Alloisio N."/>
            <person name="Bagnarol E."/>
            <person name="Bassi C.A."/>
            <person name="Berry A.M."/>
            <person name="Bickhart D.M."/>
            <person name="Choisne N."/>
            <person name="Couloux A."/>
            <person name="Cournoyer B."/>
            <person name="Cruveiller S."/>
            <person name="Daubin V."/>
            <person name="Demange N."/>
            <person name="Francino M.P."/>
            <person name="Goltsman E."/>
            <person name="Huang Y."/>
            <person name="Kopp O.R."/>
            <person name="Labarre L."/>
            <person name="Lapidus A."/>
            <person name="Lavire C."/>
            <person name="Marechal J."/>
            <person name="Martinez M."/>
            <person name="Mastronunzio J.E."/>
            <person name="Mullin B.C."/>
            <person name="Niemann J."/>
            <person name="Pujic P."/>
            <person name="Rawnsley T."/>
            <person name="Rouy Z."/>
            <person name="Schenowitz C."/>
            <person name="Sellstedt A."/>
            <person name="Tavares F."/>
            <person name="Tomkins J.P."/>
            <person name="Vallenet D."/>
            <person name="Valverde C."/>
            <person name="Wall L.G."/>
            <person name="Wang Y."/>
            <person name="Medigue C."/>
            <person name="Benson D.R."/>
        </authorList>
    </citation>
    <scope>NUCLEOTIDE SEQUENCE [LARGE SCALE GENOMIC DNA]</scope>
    <source>
        <strain>DSM 45818 / CECT 9043 / HFP020203 / CcI3</strain>
    </source>
</reference>
<dbReference type="EC" id="2.7.8.26" evidence="1"/>
<dbReference type="EMBL" id="CP000249">
    <property type="protein sequence ID" value="ABD12488.1"/>
    <property type="molecule type" value="Genomic_DNA"/>
</dbReference>
<dbReference type="STRING" id="106370.Francci3_3131"/>
<dbReference type="KEGG" id="fra:Francci3_3131"/>
<dbReference type="eggNOG" id="COG0368">
    <property type="taxonomic scope" value="Bacteria"/>
</dbReference>
<dbReference type="HOGENOM" id="CLU_057426_0_1_11"/>
<dbReference type="OrthoDB" id="9794223at2"/>
<dbReference type="UniPathway" id="UPA00148">
    <property type="reaction ID" value="UER00238"/>
</dbReference>
<dbReference type="Proteomes" id="UP000001937">
    <property type="component" value="Chromosome"/>
</dbReference>
<dbReference type="GO" id="GO:0005886">
    <property type="term" value="C:plasma membrane"/>
    <property type="evidence" value="ECO:0007669"/>
    <property type="project" value="UniProtKB-SubCell"/>
</dbReference>
<dbReference type="GO" id="GO:0051073">
    <property type="term" value="F:adenosylcobinamide-GDP ribazoletransferase activity"/>
    <property type="evidence" value="ECO:0007669"/>
    <property type="project" value="UniProtKB-UniRule"/>
</dbReference>
<dbReference type="GO" id="GO:0008818">
    <property type="term" value="F:cobalamin 5'-phosphate synthase activity"/>
    <property type="evidence" value="ECO:0007669"/>
    <property type="project" value="UniProtKB-UniRule"/>
</dbReference>
<dbReference type="GO" id="GO:0009236">
    <property type="term" value="P:cobalamin biosynthetic process"/>
    <property type="evidence" value="ECO:0007669"/>
    <property type="project" value="UniProtKB-UniRule"/>
</dbReference>
<dbReference type="HAMAP" id="MF_00719">
    <property type="entry name" value="CobS"/>
    <property type="match status" value="1"/>
</dbReference>
<dbReference type="InterPro" id="IPR003805">
    <property type="entry name" value="CobS"/>
</dbReference>
<dbReference type="PANTHER" id="PTHR34148">
    <property type="entry name" value="ADENOSYLCOBINAMIDE-GDP RIBAZOLETRANSFERASE"/>
    <property type="match status" value="1"/>
</dbReference>
<dbReference type="PANTHER" id="PTHR34148:SF1">
    <property type="entry name" value="ADENOSYLCOBINAMIDE-GDP RIBAZOLETRANSFERASE"/>
    <property type="match status" value="1"/>
</dbReference>
<dbReference type="Pfam" id="PF02654">
    <property type="entry name" value="CobS"/>
    <property type="match status" value="1"/>
</dbReference>
<accession>Q2J8A4</accession>
<evidence type="ECO:0000255" key="1">
    <source>
        <dbReference type="HAMAP-Rule" id="MF_00719"/>
    </source>
</evidence>
<gene>
    <name evidence="1" type="primary">cobS</name>
    <name type="ordered locus">Francci3_3131</name>
</gene>
<comment type="function">
    <text evidence="1">Joins adenosylcobinamide-GDP and alpha-ribazole to generate adenosylcobalamin (Ado-cobalamin). Also synthesizes adenosylcobalamin 5'-phosphate from adenosylcobinamide-GDP and alpha-ribazole 5'-phosphate.</text>
</comment>
<comment type="catalytic activity">
    <reaction evidence="1">
        <text>alpha-ribazole + adenosylcob(III)inamide-GDP = adenosylcob(III)alamin + GMP + H(+)</text>
        <dbReference type="Rhea" id="RHEA:16049"/>
        <dbReference type="ChEBI" id="CHEBI:10329"/>
        <dbReference type="ChEBI" id="CHEBI:15378"/>
        <dbReference type="ChEBI" id="CHEBI:18408"/>
        <dbReference type="ChEBI" id="CHEBI:58115"/>
        <dbReference type="ChEBI" id="CHEBI:60487"/>
        <dbReference type="EC" id="2.7.8.26"/>
    </reaction>
</comment>
<comment type="catalytic activity">
    <reaction evidence="1">
        <text>alpha-ribazole 5'-phosphate + adenosylcob(III)inamide-GDP = adenosylcob(III)alamin 5'-phosphate + GMP + H(+)</text>
        <dbReference type="Rhea" id="RHEA:23560"/>
        <dbReference type="ChEBI" id="CHEBI:15378"/>
        <dbReference type="ChEBI" id="CHEBI:57918"/>
        <dbReference type="ChEBI" id="CHEBI:58115"/>
        <dbReference type="ChEBI" id="CHEBI:60487"/>
        <dbReference type="ChEBI" id="CHEBI:60493"/>
        <dbReference type="EC" id="2.7.8.26"/>
    </reaction>
</comment>
<comment type="cofactor">
    <cofactor evidence="1">
        <name>Mg(2+)</name>
        <dbReference type="ChEBI" id="CHEBI:18420"/>
    </cofactor>
</comment>
<comment type="pathway">
    <text evidence="1">Cofactor biosynthesis; adenosylcobalamin biosynthesis; adenosylcobalamin from cob(II)yrinate a,c-diamide: step 7/7.</text>
</comment>
<comment type="subcellular location">
    <subcellularLocation>
        <location evidence="1">Cell membrane</location>
        <topology evidence="1">Multi-pass membrane protein</topology>
    </subcellularLocation>
</comment>
<comment type="similarity">
    <text evidence="1">Belongs to the CobS family.</text>
</comment>